<comment type="function">
    <text evidence="1">Component of the CTLH E3 ubiquitin-protein ligase complex that mediates ubiquitination and subsequent proteasomal degradation of target proteins.</text>
</comment>
<comment type="subunit">
    <text evidence="1">Identified in the CTLH complex that contains at least MAEA, RMND5A (or alternatively its paralog RMND5B), GID8, WDR26, and RANBP9 and/or RANBP10; ARMC8 has an ancillary role in the complex.</text>
</comment>
<comment type="subcellular location">
    <subcellularLocation>
        <location evidence="1">Nucleus</location>
    </subcellularLocation>
    <subcellularLocation>
        <location evidence="1">Cytoplasm</location>
    </subcellularLocation>
</comment>
<accession>Q05AL1</accession>
<proteinExistence type="evidence at transcript level"/>
<sequence length="673" mass="75451">MACLLEAPLRISVLSEVTATSRHYVDRLFDPDPQNVLQGVIDMKNAVIGNNKQKANLIVLGAVPRLLYLLQQSSSTLELRTECAVVLGSLSMGTENNIKSLVDCHIIPALLQGLLCSDLIFIEACLRCLRTVFISPVTPVQLLYTDPTVIPHLMSLLSRSQHTQEYITQIFAHCCKTPEHQTVLFNHGAIQNIAPLLISPSYKVRMQALKCFSVLAYENAQVSMTLVNVLVDGEQLSQVFVRMMQRDKPIEMQLTAAKCLTYMCRAGAIRTEDNCIVLKTLPCLVRMCSKERLLEERVEGAETLAYLMEPDIELQRIASVTDHLVSMLADYFKYPSSVSAITDIKRLDHDLKHAHELRQAAFKLYASLGSNDEDIRKKITETENMMDRIVSGLSESSIKVRLAAVRCLHSLSRSVQQLRTSFHDHAVWKPLMKLLQNAPDEVLVMASSTLCNLLLEFSPSKEPILESGVIELLCSLTQSDSSALRVNGIWALMNMAFQADQKVKVEIVRALGTEQLFRLLSDPDTNVLMKTLGLLRNLLSTRPHIDQIMSSHGKQIMQAVTLILEGEHSIEVKEQTLCILANIADGNTAKELIMTDDDMLQKIKYYMGHSNVKLQLAATFCISNLIWNEEDGSQERQDKLREMGFVDILHKLTQASDPDLCDRAKTAMQQYLA</sequence>
<name>ARMC8_DANRE</name>
<gene>
    <name type="primary">armc8</name>
    <name type="ORF">zgc:153683</name>
</gene>
<dbReference type="EMBL" id="BC124424">
    <property type="protein sequence ID" value="AAI24425.1"/>
    <property type="molecule type" value="mRNA"/>
</dbReference>
<dbReference type="RefSeq" id="NP_001073151.1">
    <property type="nucleotide sequence ID" value="NM_001079683.1"/>
</dbReference>
<dbReference type="SMR" id="Q05AL1"/>
<dbReference type="FunCoup" id="Q05AL1">
    <property type="interactions" value="587"/>
</dbReference>
<dbReference type="STRING" id="7955.ENSDARP00000115627"/>
<dbReference type="PaxDb" id="7955-ENSDARP00000115627"/>
<dbReference type="GeneID" id="571528"/>
<dbReference type="KEGG" id="dre:571528"/>
<dbReference type="AGR" id="ZFIN:ZDB-GENE-061027-88"/>
<dbReference type="CTD" id="25852"/>
<dbReference type="ZFIN" id="ZDB-GENE-061027-88">
    <property type="gene designation" value="armc8"/>
</dbReference>
<dbReference type="eggNOG" id="KOG1293">
    <property type="taxonomic scope" value="Eukaryota"/>
</dbReference>
<dbReference type="InParanoid" id="Q05AL1"/>
<dbReference type="OrthoDB" id="5559898at2759"/>
<dbReference type="PhylomeDB" id="Q05AL1"/>
<dbReference type="Reactome" id="R-DRE-6798695">
    <property type="pathway name" value="Neutrophil degranulation"/>
</dbReference>
<dbReference type="Reactome" id="R-DRE-9861718">
    <property type="pathway name" value="Regulation of pyruvate metabolism"/>
</dbReference>
<dbReference type="PRO" id="PR:Q05AL1"/>
<dbReference type="Proteomes" id="UP000000437">
    <property type="component" value="Alternate scaffold 9"/>
</dbReference>
<dbReference type="Proteomes" id="UP000000437">
    <property type="component" value="Chromosome 9"/>
</dbReference>
<dbReference type="GO" id="GO:0005737">
    <property type="term" value="C:cytoplasm"/>
    <property type="evidence" value="ECO:0000250"/>
    <property type="project" value="UniProtKB"/>
</dbReference>
<dbReference type="GO" id="GO:0034657">
    <property type="term" value="C:GID complex"/>
    <property type="evidence" value="ECO:0000318"/>
    <property type="project" value="GO_Central"/>
</dbReference>
<dbReference type="GO" id="GO:0005634">
    <property type="term" value="C:nucleus"/>
    <property type="evidence" value="ECO:0000250"/>
    <property type="project" value="UniProtKB"/>
</dbReference>
<dbReference type="GO" id="GO:0000151">
    <property type="term" value="C:ubiquitin ligase complex"/>
    <property type="evidence" value="ECO:0000250"/>
    <property type="project" value="UniProtKB"/>
</dbReference>
<dbReference type="GO" id="GO:0048513">
    <property type="term" value="P:animal organ development"/>
    <property type="evidence" value="ECO:0007669"/>
    <property type="project" value="UniProtKB-ARBA"/>
</dbReference>
<dbReference type="GO" id="GO:0043161">
    <property type="term" value="P:proteasome-mediated ubiquitin-dependent protein catabolic process"/>
    <property type="evidence" value="ECO:0000318"/>
    <property type="project" value="GO_Central"/>
</dbReference>
<dbReference type="FunFam" id="1.25.10.10:FF:000061">
    <property type="entry name" value="armadillo repeat-containing protein 8 isoform X1"/>
    <property type="match status" value="1"/>
</dbReference>
<dbReference type="FunFam" id="1.25.10.10:FF:000070">
    <property type="entry name" value="armadillo repeat-containing protein 8 isoform X1"/>
    <property type="match status" value="1"/>
</dbReference>
<dbReference type="Gene3D" id="1.25.10.10">
    <property type="entry name" value="Leucine-rich Repeat Variant"/>
    <property type="match status" value="2"/>
</dbReference>
<dbReference type="InterPro" id="IPR011989">
    <property type="entry name" value="ARM-like"/>
</dbReference>
<dbReference type="InterPro" id="IPR016024">
    <property type="entry name" value="ARM-type_fold"/>
</dbReference>
<dbReference type="InterPro" id="IPR000225">
    <property type="entry name" value="Armadillo"/>
</dbReference>
<dbReference type="InterPro" id="IPR038739">
    <property type="entry name" value="ARMC8/Vid28"/>
</dbReference>
<dbReference type="PANTHER" id="PTHR15651">
    <property type="entry name" value="ARMADILLO REPEAT-CONTAINING PROTEIN 8"/>
    <property type="match status" value="1"/>
</dbReference>
<dbReference type="PANTHER" id="PTHR15651:SF7">
    <property type="entry name" value="ARMADILLO REPEAT-CONTAINING PROTEIN 8"/>
    <property type="match status" value="1"/>
</dbReference>
<dbReference type="SMART" id="SM00185">
    <property type="entry name" value="ARM"/>
    <property type="match status" value="9"/>
</dbReference>
<dbReference type="SUPFAM" id="SSF48371">
    <property type="entry name" value="ARM repeat"/>
    <property type="match status" value="1"/>
</dbReference>
<dbReference type="PROSITE" id="PS50176">
    <property type="entry name" value="ARM_REPEAT"/>
    <property type="match status" value="2"/>
</dbReference>
<reference key="1">
    <citation type="submission" date="2006-09" db="EMBL/GenBank/DDBJ databases">
        <authorList>
            <consortium name="NIH - Zebrafish Gene Collection (ZGC) project"/>
        </authorList>
    </citation>
    <scope>NUCLEOTIDE SEQUENCE [LARGE SCALE MRNA]</scope>
    <source>
        <tissue>Ovary</tissue>
    </source>
</reference>
<evidence type="ECO:0000250" key="1">
    <source>
        <dbReference type="UniProtKB" id="Q8IUR7"/>
    </source>
</evidence>
<feature type="chain" id="PRO_0000284412" description="Armadillo repeat-containing protein 8">
    <location>
        <begin position="1"/>
        <end position="673"/>
    </location>
</feature>
<feature type="repeat" description="ARM 1">
    <location>
        <begin position="51"/>
        <end position="92"/>
    </location>
</feature>
<feature type="repeat" description="ARM 2">
    <location>
        <begin position="95"/>
        <end position="134"/>
    </location>
</feature>
<feature type="repeat" description="ARM 3">
    <location>
        <begin position="138"/>
        <end position="176"/>
    </location>
</feature>
<feature type="repeat" description="ARM 4">
    <location>
        <begin position="178"/>
        <end position="217"/>
    </location>
</feature>
<feature type="repeat" description="ARM 5">
    <location>
        <begin position="225"/>
        <end position="265"/>
    </location>
</feature>
<feature type="repeat" description="ARM 6">
    <location>
        <begin position="269"/>
        <end position="309"/>
    </location>
</feature>
<feature type="repeat" description="ARM 7">
    <location>
        <begin position="313"/>
        <end position="352"/>
    </location>
</feature>
<feature type="repeat" description="ARM 8">
    <location>
        <begin position="374"/>
        <end position="413"/>
    </location>
</feature>
<feature type="repeat" description="ARM 9">
    <location>
        <begin position="416"/>
        <end position="455"/>
    </location>
</feature>
<feature type="repeat" description="ARM 10">
    <location>
        <begin position="458"/>
        <end position="497"/>
    </location>
</feature>
<feature type="repeat" description="ARM 11">
    <location>
        <begin position="501"/>
        <end position="540"/>
    </location>
</feature>
<feature type="repeat" description="ARM 12">
    <location>
        <begin position="543"/>
        <end position="585"/>
    </location>
</feature>
<feature type="repeat" description="ARM 13">
    <location>
        <begin position="588"/>
        <end position="627"/>
    </location>
</feature>
<feature type="repeat" description="ARM 14">
    <location>
        <begin position="634"/>
        <end position="673"/>
    </location>
</feature>
<organism>
    <name type="scientific">Danio rerio</name>
    <name type="common">Zebrafish</name>
    <name type="synonym">Brachydanio rerio</name>
    <dbReference type="NCBI Taxonomy" id="7955"/>
    <lineage>
        <taxon>Eukaryota</taxon>
        <taxon>Metazoa</taxon>
        <taxon>Chordata</taxon>
        <taxon>Craniata</taxon>
        <taxon>Vertebrata</taxon>
        <taxon>Euteleostomi</taxon>
        <taxon>Actinopterygii</taxon>
        <taxon>Neopterygii</taxon>
        <taxon>Teleostei</taxon>
        <taxon>Ostariophysi</taxon>
        <taxon>Cypriniformes</taxon>
        <taxon>Danionidae</taxon>
        <taxon>Danioninae</taxon>
        <taxon>Danio</taxon>
    </lineage>
</organism>
<protein>
    <recommendedName>
        <fullName>Armadillo repeat-containing protein 8</fullName>
    </recommendedName>
</protein>
<keyword id="KW-0963">Cytoplasm</keyword>
<keyword id="KW-0539">Nucleus</keyword>
<keyword id="KW-1185">Reference proteome</keyword>
<keyword id="KW-0677">Repeat</keyword>